<organism>
    <name type="scientific">Dehalococcoides mccartyi (strain ATCC BAA-2266 / KCTC 15142 / 195)</name>
    <name type="common">Dehalococcoides ethenogenes (strain 195)</name>
    <dbReference type="NCBI Taxonomy" id="243164"/>
    <lineage>
        <taxon>Bacteria</taxon>
        <taxon>Bacillati</taxon>
        <taxon>Chloroflexota</taxon>
        <taxon>Dehalococcoidia</taxon>
        <taxon>Dehalococcoidales</taxon>
        <taxon>Dehalococcoidaceae</taxon>
        <taxon>Dehalococcoides</taxon>
    </lineage>
</organism>
<sequence>MFSPRTEIENLRREINRHNQLYYVQDNPEISDSEYDALLRRLKELEEAHPELVTADSPTQRVGAEPLKAFGIVNHPYPLLSLANAFSDTELEAWYLRVKKLLGNAAFQIDCEPKMDGLAVALTYRNGKFTTGATRGDGFQGENITRNLRTIHSIPLNTEEDAPPVFEIRGEVYLPKEGFAKLNRERADKGLSLFANPRNAAAGSLRQLDPSVTAERPLDIFIYALGYAEDSLLPDSHWQILEYFSRLGFKINPRNRLVNTLEEAKEYYREMAENRDSLPYEADGVVFKVDSVSLQQKLGDAGREPRWAIAYKFPAEQVTTLLRKIGISVGRTGTLNPYAILEPVNVGGVVVKQASLHNEDDILRKDIREGDTVVIQRAGEVIPEVVAPVLAKRSPESKPFSMEETLFNPKLSRPACPVCGGEIYRPAGEAMHYCANVSCPAQFERQLEHFVSRGTMDIRGIGESLSVILAQEGLVKNVSDLYYLTAADLLKLPRMGEKSADNIIKAIADSKSRPLDRVIFGLGIRHVGNETAALLSSRYGDIWALAGAGLDELQTIPDIGAKIASSIKAYFSEEKNIAVIRRLETAGVKLASDQKPSYKPLPLSGVEFVVTGKLDSLSREEAQQKIRSLGGTAKDNVTKATRYLVVGADAGSKLAKARSMGVKELSEQEFINMLEQS</sequence>
<name>DNLJ_DEHM1</name>
<comment type="function">
    <text evidence="1">DNA ligase that catalyzes the formation of phosphodiester linkages between 5'-phosphoryl and 3'-hydroxyl groups in double-stranded DNA using NAD as a coenzyme and as the energy source for the reaction. It is essential for DNA replication and repair of damaged DNA.</text>
</comment>
<comment type="catalytic activity">
    <reaction evidence="1">
        <text>NAD(+) + (deoxyribonucleotide)n-3'-hydroxyl + 5'-phospho-(deoxyribonucleotide)m = (deoxyribonucleotide)n+m + AMP + beta-nicotinamide D-nucleotide.</text>
        <dbReference type="EC" id="6.5.1.2"/>
    </reaction>
</comment>
<comment type="cofactor">
    <cofactor evidence="1">
        <name>Mg(2+)</name>
        <dbReference type="ChEBI" id="CHEBI:18420"/>
    </cofactor>
    <cofactor evidence="1">
        <name>Mn(2+)</name>
        <dbReference type="ChEBI" id="CHEBI:29035"/>
    </cofactor>
</comment>
<comment type="similarity">
    <text evidence="1">Belongs to the NAD-dependent DNA ligase family. LigA subfamily.</text>
</comment>
<proteinExistence type="inferred from homology"/>
<evidence type="ECO:0000255" key="1">
    <source>
        <dbReference type="HAMAP-Rule" id="MF_01588"/>
    </source>
</evidence>
<reference key="1">
    <citation type="journal article" date="2005" name="Science">
        <title>Genome sequence of the PCE-dechlorinating bacterium Dehalococcoides ethenogenes.</title>
        <authorList>
            <person name="Seshadri R."/>
            <person name="Adrian L."/>
            <person name="Fouts D.E."/>
            <person name="Eisen J.A."/>
            <person name="Phillippy A.M."/>
            <person name="Methe B.A."/>
            <person name="Ward N.L."/>
            <person name="Nelson W.C."/>
            <person name="DeBoy R.T."/>
            <person name="Khouri H.M."/>
            <person name="Kolonay J.F."/>
            <person name="Dodson R.J."/>
            <person name="Daugherty S.C."/>
            <person name="Brinkac L.M."/>
            <person name="Sullivan S.A."/>
            <person name="Madupu R."/>
            <person name="Nelson K.E."/>
            <person name="Kang K.H."/>
            <person name="Impraim M."/>
            <person name="Tran K."/>
            <person name="Robinson J.M."/>
            <person name="Forberger H.A."/>
            <person name="Fraser C.M."/>
            <person name="Zinder S.H."/>
            <person name="Heidelberg J.F."/>
        </authorList>
    </citation>
    <scope>NUCLEOTIDE SEQUENCE [LARGE SCALE GENOMIC DNA]</scope>
    <source>
        <strain>ATCC BAA-2266 / KCTC 15142 / 195</strain>
    </source>
</reference>
<accession>Q3Z8W1</accession>
<keyword id="KW-0227">DNA damage</keyword>
<keyword id="KW-0234">DNA repair</keyword>
<keyword id="KW-0235">DNA replication</keyword>
<keyword id="KW-0436">Ligase</keyword>
<keyword id="KW-0460">Magnesium</keyword>
<keyword id="KW-0464">Manganese</keyword>
<keyword id="KW-0479">Metal-binding</keyword>
<keyword id="KW-0520">NAD</keyword>
<keyword id="KW-0862">Zinc</keyword>
<protein>
    <recommendedName>
        <fullName evidence="1">DNA ligase</fullName>
        <ecNumber evidence="1">6.5.1.2</ecNumber>
    </recommendedName>
    <alternativeName>
        <fullName evidence="1">Polydeoxyribonucleotide synthase [NAD(+)]</fullName>
    </alternativeName>
</protein>
<dbReference type="EC" id="6.5.1.2" evidence="1"/>
<dbReference type="EMBL" id="CP000027">
    <property type="protein sequence ID" value="AAW40111.1"/>
    <property type="molecule type" value="Genomic_DNA"/>
</dbReference>
<dbReference type="RefSeq" id="WP_010936371.1">
    <property type="nucleotide sequence ID" value="NC_002936.3"/>
</dbReference>
<dbReference type="SMR" id="Q3Z8W1"/>
<dbReference type="FunCoup" id="Q3Z8W1">
    <property type="interactions" value="245"/>
</dbReference>
<dbReference type="STRING" id="243164.DET0596"/>
<dbReference type="GeneID" id="3230074"/>
<dbReference type="KEGG" id="det:DET0596"/>
<dbReference type="PATRIC" id="fig|243164.10.peg.574"/>
<dbReference type="eggNOG" id="COG0272">
    <property type="taxonomic scope" value="Bacteria"/>
</dbReference>
<dbReference type="HOGENOM" id="CLU_007764_2_1_0"/>
<dbReference type="InParanoid" id="Q3Z8W1"/>
<dbReference type="Proteomes" id="UP000008289">
    <property type="component" value="Chromosome"/>
</dbReference>
<dbReference type="GO" id="GO:0005829">
    <property type="term" value="C:cytosol"/>
    <property type="evidence" value="ECO:0007669"/>
    <property type="project" value="TreeGrafter"/>
</dbReference>
<dbReference type="GO" id="GO:0003677">
    <property type="term" value="F:DNA binding"/>
    <property type="evidence" value="ECO:0007669"/>
    <property type="project" value="InterPro"/>
</dbReference>
<dbReference type="GO" id="GO:0003911">
    <property type="term" value="F:DNA ligase (NAD+) activity"/>
    <property type="evidence" value="ECO:0007669"/>
    <property type="project" value="UniProtKB-UniRule"/>
</dbReference>
<dbReference type="GO" id="GO:0046872">
    <property type="term" value="F:metal ion binding"/>
    <property type="evidence" value="ECO:0007669"/>
    <property type="project" value="UniProtKB-KW"/>
</dbReference>
<dbReference type="GO" id="GO:0006281">
    <property type="term" value="P:DNA repair"/>
    <property type="evidence" value="ECO:0007669"/>
    <property type="project" value="UniProtKB-KW"/>
</dbReference>
<dbReference type="GO" id="GO:0006260">
    <property type="term" value="P:DNA replication"/>
    <property type="evidence" value="ECO:0007669"/>
    <property type="project" value="UniProtKB-KW"/>
</dbReference>
<dbReference type="CDD" id="cd17748">
    <property type="entry name" value="BRCT_DNA_ligase_like"/>
    <property type="match status" value="1"/>
</dbReference>
<dbReference type="CDD" id="cd00114">
    <property type="entry name" value="LIGANc"/>
    <property type="match status" value="1"/>
</dbReference>
<dbReference type="FunFam" id="1.10.150.20:FF:000006">
    <property type="entry name" value="DNA ligase"/>
    <property type="match status" value="1"/>
</dbReference>
<dbReference type="FunFam" id="1.10.150.20:FF:000007">
    <property type="entry name" value="DNA ligase"/>
    <property type="match status" value="1"/>
</dbReference>
<dbReference type="FunFam" id="1.10.287.610:FF:000002">
    <property type="entry name" value="DNA ligase"/>
    <property type="match status" value="1"/>
</dbReference>
<dbReference type="FunFam" id="3.30.470.30:FF:000001">
    <property type="entry name" value="DNA ligase"/>
    <property type="match status" value="1"/>
</dbReference>
<dbReference type="Gene3D" id="6.20.10.30">
    <property type="match status" value="1"/>
</dbReference>
<dbReference type="Gene3D" id="1.10.150.20">
    <property type="entry name" value="5' to 3' exonuclease, C-terminal subdomain"/>
    <property type="match status" value="2"/>
</dbReference>
<dbReference type="Gene3D" id="3.40.50.10190">
    <property type="entry name" value="BRCT domain"/>
    <property type="match status" value="1"/>
</dbReference>
<dbReference type="Gene3D" id="3.30.470.30">
    <property type="entry name" value="DNA ligase/mRNA capping enzyme"/>
    <property type="match status" value="1"/>
</dbReference>
<dbReference type="Gene3D" id="1.10.287.610">
    <property type="entry name" value="Helix hairpin bin"/>
    <property type="match status" value="1"/>
</dbReference>
<dbReference type="Gene3D" id="2.40.50.140">
    <property type="entry name" value="Nucleic acid-binding proteins"/>
    <property type="match status" value="1"/>
</dbReference>
<dbReference type="HAMAP" id="MF_01588">
    <property type="entry name" value="DNA_ligase_A"/>
    <property type="match status" value="1"/>
</dbReference>
<dbReference type="InterPro" id="IPR001357">
    <property type="entry name" value="BRCT_dom"/>
</dbReference>
<dbReference type="InterPro" id="IPR036420">
    <property type="entry name" value="BRCT_dom_sf"/>
</dbReference>
<dbReference type="InterPro" id="IPR041663">
    <property type="entry name" value="DisA/LigA_HHH"/>
</dbReference>
<dbReference type="InterPro" id="IPR001679">
    <property type="entry name" value="DNA_ligase"/>
</dbReference>
<dbReference type="InterPro" id="IPR018239">
    <property type="entry name" value="DNA_ligase_AS"/>
</dbReference>
<dbReference type="InterPro" id="IPR033136">
    <property type="entry name" value="DNA_ligase_CS"/>
</dbReference>
<dbReference type="InterPro" id="IPR013839">
    <property type="entry name" value="DNAligase_adenylation"/>
</dbReference>
<dbReference type="InterPro" id="IPR013840">
    <property type="entry name" value="DNAligase_N"/>
</dbReference>
<dbReference type="InterPro" id="IPR003583">
    <property type="entry name" value="Hlx-hairpin-Hlx_DNA-bd_motif"/>
</dbReference>
<dbReference type="InterPro" id="IPR012340">
    <property type="entry name" value="NA-bd_OB-fold"/>
</dbReference>
<dbReference type="InterPro" id="IPR004150">
    <property type="entry name" value="NAD_DNA_ligase_OB"/>
</dbReference>
<dbReference type="InterPro" id="IPR010994">
    <property type="entry name" value="RuvA_2-like"/>
</dbReference>
<dbReference type="InterPro" id="IPR004149">
    <property type="entry name" value="Znf_DNAligase_C4"/>
</dbReference>
<dbReference type="NCBIfam" id="TIGR00575">
    <property type="entry name" value="dnlj"/>
    <property type="match status" value="1"/>
</dbReference>
<dbReference type="NCBIfam" id="NF005932">
    <property type="entry name" value="PRK07956.1"/>
    <property type="match status" value="1"/>
</dbReference>
<dbReference type="PANTHER" id="PTHR23389">
    <property type="entry name" value="CHROMOSOME TRANSMISSION FIDELITY FACTOR 18"/>
    <property type="match status" value="1"/>
</dbReference>
<dbReference type="PANTHER" id="PTHR23389:SF9">
    <property type="entry name" value="DNA LIGASE"/>
    <property type="match status" value="1"/>
</dbReference>
<dbReference type="Pfam" id="PF00533">
    <property type="entry name" value="BRCT"/>
    <property type="match status" value="1"/>
</dbReference>
<dbReference type="Pfam" id="PF01653">
    <property type="entry name" value="DNA_ligase_aden"/>
    <property type="match status" value="1"/>
</dbReference>
<dbReference type="Pfam" id="PF03120">
    <property type="entry name" value="DNA_ligase_OB"/>
    <property type="match status" value="1"/>
</dbReference>
<dbReference type="Pfam" id="PF03119">
    <property type="entry name" value="DNA_ligase_ZBD"/>
    <property type="match status" value="1"/>
</dbReference>
<dbReference type="Pfam" id="PF12826">
    <property type="entry name" value="HHH_2"/>
    <property type="match status" value="1"/>
</dbReference>
<dbReference type="Pfam" id="PF14520">
    <property type="entry name" value="HHH_5"/>
    <property type="match status" value="1"/>
</dbReference>
<dbReference type="Pfam" id="PF22745">
    <property type="entry name" value="Nlig-Ia"/>
    <property type="match status" value="1"/>
</dbReference>
<dbReference type="PIRSF" id="PIRSF001604">
    <property type="entry name" value="LigA"/>
    <property type="match status" value="1"/>
</dbReference>
<dbReference type="SMART" id="SM00292">
    <property type="entry name" value="BRCT"/>
    <property type="match status" value="1"/>
</dbReference>
<dbReference type="SMART" id="SM00278">
    <property type="entry name" value="HhH1"/>
    <property type="match status" value="2"/>
</dbReference>
<dbReference type="SMART" id="SM00532">
    <property type="entry name" value="LIGANc"/>
    <property type="match status" value="1"/>
</dbReference>
<dbReference type="SUPFAM" id="SSF52113">
    <property type="entry name" value="BRCT domain"/>
    <property type="match status" value="1"/>
</dbReference>
<dbReference type="SUPFAM" id="SSF56091">
    <property type="entry name" value="DNA ligase/mRNA capping enzyme, catalytic domain"/>
    <property type="match status" value="1"/>
</dbReference>
<dbReference type="SUPFAM" id="SSF50249">
    <property type="entry name" value="Nucleic acid-binding proteins"/>
    <property type="match status" value="1"/>
</dbReference>
<dbReference type="SUPFAM" id="SSF47781">
    <property type="entry name" value="RuvA domain 2-like"/>
    <property type="match status" value="1"/>
</dbReference>
<dbReference type="PROSITE" id="PS50172">
    <property type="entry name" value="BRCT"/>
    <property type="match status" value="1"/>
</dbReference>
<dbReference type="PROSITE" id="PS01055">
    <property type="entry name" value="DNA_LIGASE_N1"/>
    <property type="match status" value="1"/>
</dbReference>
<dbReference type="PROSITE" id="PS01056">
    <property type="entry name" value="DNA_LIGASE_N2"/>
    <property type="match status" value="1"/>
</dbReference>
<feature type="chain" id="PRO_0000313212" description="DNA ligase">
    <location>
        <begin position="1"/>
        <end position="677"/>
    </location>
</feature>
<feature type="domain" description="BRCT" evidence="1">
    <location>
        <begin position="598"/>
        <end position="677"/>
    </location>
</feature>
<feature type="active site" description="N6-AMP-lysine intermediate" evidence="1">
    <location>
        <position position="114"/>
    </location>
</feature>
<feature type="binding site" evidence="1">
    <location>
        <begin position="32"/>
        <end position="36"/>
    </location>
    <ligand>
        <name>NAD(+)</name>
        <dbReference type="ChEBI" id="CHEBI:57540"/>
    </ligand>
</feature>
<feature type="binding site" evidence="1">
    <location>
        <begin position="81"/>
        <end position="82"/>
    </location>
    <ligand>
        <name>NAD(+)</name>
        <dbReference type="ChEBI" id="CHEBI:57540"/>
    </ligand>
</feature>
<feature type="binding site" evidence="1">
    <location>
        <position position="112"/>
    </location>
    <ligand>
        <name>NAD(+)</name>
        <dbReference type="ChEBI" id="CHEBI:57540"/>
    </ligand>
</feature>
<feature type="binding site" evidence="1">
    <location>
        <position position="135"/>
    </location>
    <ligand>
        <name>NAD(+)</name>
        <dbReference type="ChEBI" id="CHEBI:57540"/>
    </ligand>
</feature>
<feature type="binding site" evidence="1">
    <location>
        <position position="171"/>
    </location>
    <ligand>
        <name>NAD(+)</name>
        <dbReference type="ChEBI" id="CHEBI:57540"/>
    </ligand>
</feature>
<feature type="binding site" evidence="1">
    <location>
        <position position="288"/>
    </location>
    <ligand>
        <name>NAD(+)</name>
        <dbReference type="ChEBI" id="CHEBI:57540"/>
    </ligand>
</feature>
<feature type="binding site" evidence="1">
    <location>
        <position position="312"/>
    </location>
    <ligand>
        <name>NAD(+)</name>
        <dbReference type="ChEBI" id="CHEBI:57540"/>
    </ligand>
</feature>
<feature type="binding site" evidence="1">
    <location>
        <position position="416"/>
    </location>
    <ligand>
        <name>Zn(2+)</name>
        <dbReference type="ChEBI" id="CHEBI:29105"/>
    </ligand>
</feature>
<feature type="binding site" evidence="1">
    <location>
        <position position="419"/>
    </location>
    <ligand>
        <name>Zn(2+)</name>
        <dbReference type="ChEBI" id="CHEBI:29105"/>
    </ligand>
</feature>
<feature type="binding site" evidence="1">
    <location>
        <position position="434"/>
    </location>
    <ligand>
        <name>Zn(2+)</name>
        <dbReference type="ChEBI" id="CHEBI:29105"/>
    </ligand>
</feature>
<feature type="binding site" evidence="1">
    <location>
        <position position="439"/>
    </location>
    <ligand>
        <name>Zn(2+)</name>
        <dbReference type="ChEBI" id="CHEBI:29105"/>
    </ligand>
</feature>
<gene>
    <name evidence="1" type="primary">ligA</name>
    <name type="ordered locus">DET0596</name>
</gene>